<comment type="function">
    <text>Negatively regulates TGF-beta signaling.</text>
</comment>
<comment type="interaction">
    <interactant intactId="EBI-742991">
        <id>Q13145</id>
    </interactant>
    <interactant intactId="EBI-3919611">
        <id>Q16617</id>
        <label>NKG7</label>
    </interactant>
    <organismsDiffer>false</organismsDiffer>
    <experiments>3</experiments>
</comment>
<comment type="subcellular location">
    <subcellularLocation>
        <location evidence="3">Membrane</location>
        <topology evidence="3">Single-pass type I membrane protein</topology>
    </subcellularLocation>
</comment>
<comment type="tissue specificity">
    <text>High expression in kidney medulla, placenta and spleen; low in kidney cortex, liver, prostate and gut. Not expressed in normal skin, expression is high in melanocytes and in 3 out of 11 melanoma metastases tested.</text>
</comment>
<comment type="developmental stage">
    <text>Expression in poorly metastatic human melanoma cell lines; no expression in highly metastatic human melanoma cell lines.</text>
</comment>
<comment type="similarity">
    <text evidence="3">Belongs to the BAMBI family.</text>
</comment>
<sequence length="260" mass="29108">MDRHSSYIFIWLQLELCAMAVLLTKGEIRCYCDAAHCVATGYMCKSELSACFSRLLDPQNSNSPLTHGCLDSLASTTDICQAKQARNHSGTTIPTLECCHEDMCNYRGLHDVLSPPRGEASGQGNRYQHDGSRNLITKVQELTSSKELWFRAAVIAVPIAGGLILVLLIMLALRMLRSENKRLQDQRQQMLSRLHYSFHGHHSKKGQVAKLDLECMVPVSGHENCCLTCDKMRQADLSNDKILSLVHWGMYSGHGKLEFV</sequence>
<evidence type="ECO:0000255" key="1"/>
<evidence type="ECO:0000269" key="2">
    <source>
    </source>
</evidence>
<evidence type="ECO:0000305" key="3"/>
<gene>
    <name type="primary">BAMBI</name>
    <name type="synonym">NMA</name>
</gene>
<keyword id="KW-0903">Direct protein sequencing</keyword>
<keyword id="KW-0325">Glycoprotein</keyword>
<keyword id="KW-0472">Membrane</keyword>
<keyword id="KW-1267">Proteomics identification</keyword>
<keyword id="KW-1185">Reference proteome</keyword>
<keyword id="KW-0732">Signal</keyword>
<keyword id="KW-0812">Transmembrane</keyword>
<keyword id="KW-1133">Transmembrane helix</keyword>
<feature type="signal peptide" evidence="2">
    <location>
        <begin position="1"/>
        <end position="20"/>
    </location>
</feature>
<feature type="chain" id="PRO_0000020779" description="BMP and activin membrane-bound inhibitor homolog">
    <location>
        <begin position="21"/>
        <end position="260"/>
    </location>
</feature>
<feature type="topological domain" description="Extracellular" evidence="1">
    <location>
        <begin position="21"/>
        <end position="152"/>
    </location>
</feature>
<feature type="transmembrane region" description="Helical" evidence="1">
    <location>
        <begin position="153"/>
        <end position="173"/>
    </location>
</feature>
<feature type="topological domain" description="Cytoplasmic" evidence="1">
    <location>
        <begin position="174"/>
        <end position="260"/>
    </location>
</feature>
<feature type="glycosylation site" description="N-linked (GlcNAc...) asparagine" evidence="1">
    <location>
        <position position="87"/>
    </location>
</feature>
<reference key="1">
    <citation type="journal article" date="1996" name="Int. J. Cancer">
        <title>Expression of nma, a novel gene, inversely correlates with the metastatic potential of human melanoma cell lines and xenografts.</title>
        <authorList>
            <person name="Degen W.G.J."/>
            <person name="Weterman M.A."/>
            <person name="van Groningen J.J.M."/>
            <person name="Cornelissen I.M.A.H."/>
            <person name="Lemmers J.P.W.M."/>
            <person name="Agterbos M.A."/>
            <person name="van Kessel A.G."/>
            <person name="Swart G.W.M."/>
            <person name="Bloemers H.P.J."/>
        </authorList>
    </citation>
    <scope>NUCLEOTIDE SEQUENCE [MRNA]</scope>
</reference>
<reference key="2">
    <citation type="submission" date="2003-05" db="EMBL/GenBank/DDBJ databases">
        <title>Cloning of human full-length CDSs in BD Creator(TM) system donor vector.</title>
        <authorList>
            <person name="Kalnine N."/>
            <person name="Chen X."/>
            <person name="Rolfs A."/>
            <person name="Halleck A."/>
            <person name="Hines L."/>
            <person name="Eisenstein S."/>
            <person name="Koundinya M."/>
            <person name="Raphael J."/>
            <person name="Moreira D."/>
            <person name="Kelley T."/>
            <person name="LaBaer J."/>
            <person name="Lin Y."/>
            <person name="Phelan M."/>
            <person name="Farmer A."/>
        </authorList>
    </citation>
    <scope>NUCLEOTIDE SEQUENCE [LARGE SCALE MRNA]</scope>
</reference>
<reference key="3">
    <citation type="journal article" date="2004" name="Nature">
        <title>The DNA sequence and comparative analysis of human chromosome 10.</title>
        <authorList>
            <person name="Deloukas P."/>
            <person name="Earthrowl M.E."/>
            <person name="Grafham D.V."/>
            <person name="Rubenfield M."/>
            <person name="French L."/>
            <person name="Steward C.A."/>
            <person name="Sims S.K."/>
            <person name="Jones M.C."/>
            <person name="Searle S."/>
            <person name="Scott C."/>
            <person name="Howe K."/>
            <person name="Hunt S.E."/>
            <person name="Andrews T.D."/>
            <person name="Gilbert J.G.R."/>
            <person name="Swarbreck D."/>
            <person name="Ashurst J.L."/>
            <person name="Taylor A."/>
            <person name="Battles J."/>
            <person name="Bird C.P."/>
            <person name="Ainscough R."/>
            <person name="Almeida J.P."/>
            <person name="Ashwell R.I.S."/>
            <person name="Ambrose K.D."/>
            <person name="Babbage A.K."/>
            <person name="Bagguley C.L."/>
            <person name="Bailey J."/>
            <person name="Banerjee R."/>
            <person name="Bates K."/>
            <person name="Beasley H."/>
            <person name="Bray-Allen S."/>
            <person name="Brown A.J."/>
            <person name="Brown J.Y."/>
            <person name="Burford D.C."/>
            <person name="Burrill W."/>
            <person name="Burton J."/>
            <person name="Cahill P."/>
            <person name="Camire D."/>
            <person name="Carter N.P."/>
            <person name="Chapman J.C."/>
            <person name="Clark S.Y."/>
            <person name="Clarke G."/>
            <person name="Clee C.M."/>
            <person name="Clegg S."/>
            <person name="Corby N."/>
            <person name="Coulson A."/>
            <person name="Dhami P."/>
            <person name="Dutta I."/>
            <person name="Dunn M."/>
            <person name="Faulkner L."/>
            <person name="Frankish A."/>
            <person name="Frankland J.A."/>
            <person name="Garner P."/>
            <person name="Garnett J."/>
            <person name="Gribble S."/>
            <person name="Griffiths C."/>
            <person name="Grocock R."/>
            <person name="Gustafson E."/>
            <person name="Hammond S."/>
            <person name="Harley J.L."/>
            <person name="Hart E."/>
            <person name="Heath P.D."/>
            <person name="Ho T.P."/>
            <person name="Hopkins B."/>
            <person name="Horne J."/>
            <person name="Howden P.J."/>
            <person name="Huckle E."/>
            <person name="Hynds C."/>
            <person name="Johnson C."/>
            <person name="Johnson D."/>
            <person name="Kana A."/>
            <person name="Kay M."/>
            <person name="Kimberley A.M."/>
            <person name="Kershaw J.K."/>
            <person name="Kokkinaki M."/>
            <person name="Laird G.K."/>
            <person name="Lawlor S."/>
            <person name="Lee H.M."/>
            <person name="Leongamornlert D.A."/>
            <person name="Laird G."/>
            <person name="Lloyd C."/>
            <person name="Lloyd D.M."/>
            <person name="Loveland J."/>
            <person name="Lovell J."/>
            <person name="McLaren S."/>
            <person name="McLay K.E."/>
            <person name="McMurray A."/>
            <person name="Mashreghi-Mohammadi M."/>
            <person name="Matthews L."/>
            <person name="Milne S."/>
            <person name="Nickerson T."/>
            <person name="Nguyen M."/>
            <person name="Overton-Larty E."/>
            <person name="Palmer S.A."/>
            <person name="Pearce A.V."/>
            <person name="Peck A.I."/>
            <person name="Pelan S."/>
            <person name="Phillimore B."/>
            <person name="Porter K."/>
            <person name="Rice C.M."/>
            <person name="Rogosin A."/>
            <person name="Ross M.T."/>
            <person name="Sarafidou T."/>
            <person name="Sehra H.K."/>
            <person name="Shownkeen R."/>
            <person name="Skuce C.D."/>
            <person name="Smith M."/>
            <person name="Standring L."/>
            <person name="Sycamore N."/>
            <person name="Tester J."/>
            <person name="Thorpe A."/>
            <person name="Torcasso W."/>
            <person name="Tracey A."/>
            <person name="Tromans A."/>
            <person name="Tsolas J."/>
            <person name="Wall M."/>
            <person name="Walsh J."/>
            <person name="Wang H."/>
            <person name="Weinstock K."/>
            <person name="West A.P."/>
            <person name="Willey D.L."/>
            <person name="Whitehead S.L."/>
            <person name="Wilming L."/>
            <person name="Wray P.W."/>
            <person name="Young L."/>
            <person name="Chen Y."/>
            <person name="Lovering R.C."/>
            <person name="Moschonas N.K."/>
            <person name="Siebert R."/>
            <person name="Fechtel K."/>
            <person name="Bentley D."/>
            <person name="Durbin R.M."/>
            <person name="Hubbard T."/>
            <person name="Doucette-Stamm L."/>
            <person name="Beck S."/>
            <person name="Smith D.R."/>
            <person name="Rogers J."/>
        </authorList>
    </citation>
    <scope>NUCLEOTIDE SEQUENCE [LARGE SCALE GENOMIC DNA]</scope>
</reference>
<reference key="4">
    <citation type="journal article" date="2004" name="Genome Res.">
        <title>The status, quality, and expansion of the NIH full-length cDNA project: the Mammalian Gene Collection (MGC).</title>
        <authorList>
            <consortium name="The MGC Project Team"/>
        </authorList>
    </citation>
    <scope>NUCLEOTIDE SEQUENCE [LARGE SCALE MRNA]</scope>
    <source>
        <tissue>Brain</tissue>
    </source>
</reference>
<reference key="5">
    <citation type="journal article" date="2004" name="Protein Sci.">
        <title>Signal peptide prediction based on analysis of experimentally verified cleavage sites.</title>
        <authorList>
            <person name="Zhang Z."/>
            <person name="Henzel W.J."/>
        </authorList>
    </citation>
    <scope>PROTEIN SEQUENCE OF 21-35</scope>
</reference>
<accession>Q13145</accession>
<name>BAMBI_HUMAN</name>
<dbReference type="EMBL" id="U23070">
    <property type="protein sequence ID" value="AAC50435.1"/>
    <property type="molecule type" value="mRNA"/>
</dbReference>
<dbReference type="EMBL" id="U29189">
    <property type="protein sequence ID" value="AAR02414.1"/>
    <property type="molecule type" value="Genomic_DNA"/>
</dbReference>
<dbReference type="EMBL" id="U29188">
    <property type="protein sequence ID" value="AAR02414.1"/>
    <property type="status" value="JOINED"/>
    <property type="molecule type" value="Genomic_DNA"/>
</dbReference>
<dbReference type="EMBL" id="BT006820">
    <property type="protein sequence ID" value="AAP35466.1"/>
    <property type="molecule type" value="mRNA"/>
</dbReference>
<dbReference type="EMBL" id="AL161936">
    <property type="status" value="NOT_ANNOTATED_CDS"/>
    <property type="molecule type" value="Genomic_DNA"/>
</dbReference>
<dbReference type="EMBL" id="BC019252">
    <property type="protein sequence ID" value="AAH19252.1"/>
    <property type="molecule type" value="mRNA"/>
</dbReference>
<dbReference type="CCDS" id="CCDS7162.1"/>
<dbReference type="RefSeq" id="NP_036474.1">
    <property type="nucleotide sequence ID" value="NM_012342.3"/>
</dbReference>
<dbReference type="BioGRID" id="117337">
    <property type="interactions" value="16"/>
</dbReference>
<dbReference type="FunCoup" id="Q13145">
    <property type="interactions" value="1045"/>
</dbReference>
<dbReference type="IntAct" id="Q13145">
    <property type="interactions" value="8"/>
</dbReference>
<dbReference type="MINT" id="Q13145"/>
<dbReference type="STRING" id="9606.ENSP00000364683"/>
<dbReference type="GlyCosmos" id="Q13145">
    <property type="glycosylation" value="1 site, No reported glycans"/>
</dbReference>
<dbReference type="GlyGen" id="Q13145">
    <property type="glycosylation" value="4 sites, 1 N-linked glycan (1 site), 1 O-linked glycan (3 sites)"/>
</dbReference>
<dbReference type="iPTMnet" id="Q13145"/>
<dbReference type="PhosphoSitePlus" id="Q13145"/>
<dbReference type="BioMuta" id="BAMBI"/>
<dbReference type="DMDM" id="2498645"/>
<dbReference type="jPOST" id="Q13145"/>
<dbReference type="MassIVE" id="Q13145"/>
<dbReference type="PaxDb" id="9606-ENSP00000364683"/>
<dbReference type="PeptideAtlas" id="Q13145"/>
<dbReference type="ProteomicsDB" id="59188"/>
<dbReference type="Antibodypedia" id="26191">
    <property type="antibodies" value="283 antibodies from 31 providers"/>
</dbReference>
<dbReference type="DNASU" id="25805"/>
<dbReference type="Ensembl" id="ENST00000375533.6">
    <property type="protein sequence ID" value="ENSP00000364683.3"/>
    <property type="gene ID" value="ENSG00000095739.11"/>
</dbReference>
<dbReference type="GeneID" id="25805"/>
<dbReference type="KEGG" id="hsa:25805"/>
<dbReference type="MANE-Select" id="ENST00000375533.6">
    <property type="protein sequence ID" value="ENSP00000364683.3"/>
    <property type="RefSeq nucleotide sequence ID" value="NM_012342.3"/>
    <property type="RefSeq protein sequence ID" value="NP_036474.1"/>
</dbReference>
<dbReference type="UCSC" id="uc001iuj.2">
    <property type="organism name" value="human"/>
</dbReference>
<dbReference type="AGR" id="HGNC:30251"/>
<dbReference type="CTD" id="25805"/>
<dbReference type="DisGeNET" id="25805"/>
<dbReference type="GeneCards" id="BAMBI"/>
<dbReference type="HGNC" id="HGNC:30251">
    <property type="gene designation" value="BAMBI"/>
</dbReference>
<dbReference type="HPA" id="ENSG00000095739">
    <property type="expression patterns" value="Low tissue specificity"/>
</dbReference>
<dbReference type="MIM" id="604444">
    <property type="type" value="gene"/>
</dbReference>
<dbReference type="neXtProt" id="NX_Q13145"/>
<dbReference type="OpenTargets" id="ENSG00000095739"/>
<dbReference type="PharmGKB" id="PA134909139"/>
<dbReference type="VEuPathDB" id="HostDB:ENSG00000095739"/>
<dbReference type="eggNOG" id="ENOG502QXJJ">
    <property type="taxonomic scope" value="Eukaryota"/>
</dbReference>
<dbReference type="GeneTree" id="ENSGT00940000154101"/>
<dbReference type="HOGENOM" id="CLU_093515_0_0_1"/>
<dbReference type="InParanoid" id="Q13145"/>
<dbReference type="OMA" id="TVECCHE"/>
<dbReference type="OrthoDB" id="5914644at2759"/>
<dbReference type="PAN-GO" id="Q13145">
    <property type="GO annotations" value="2 GO annotations based on evolutionary models"/>
</dbReference>
<dbReference type="PhylomeDB" id="Q13145"/>
<dbReference type="TreeFam" id="TF333466"/>
<dbReference type="PathwayCommons" id="Q13145"/>
<dbReference type="Reactome" id="R-HSA-2173788">
    <property type="pathway name" value="Downregulation of TGF-beta receptor signaling"/>
</dbReference>
<dbReference type="SignaLink" id="Q13145"/>
<dbReference type="SIGNOR" id="Q13145"/>
<dbReference type="BioGRID-ORCS" id="25805">
    <property type="hits" value="49 hits in 1155 CRISPR screens"/>
</dbReference>
<dbReference type="ChiTaRS" id="BAMBI">
    <property type="organism name" value="human"/>
</dbReference>
<dbReference type="GeneWiki" id="BAMBI"/>
<dbReference type="GenomeRNAi" id="25805"/>
<dbReference type="Pharos" id="Q13145">
    <property type="development level" value="Tbio"/>
</dbReference>
<dbReference type="PRO" id="PR:Q13145"/>
<dbReference type="Proteomes" id="UP000005640">
    <property type="component" value="Chromosome 10"/>
</dbReference>
<dbReference type="RNAct" id="Q13145">
    <property type="molecule type" value="protein"/>
</dbReference>
<dbReference type="Bgee" id="ENSG00000095739">
    <property type="expression patterns" value="Expressed in tibia and 191 other cell types or tissues"/>
</dbReference>
<dbReference type="GO" id="GO:0005737">
    <property type="term" value="C:cytoplasm"/>
    <property type="evidence" value="ECO:0000314"/>
    <property type="project" value="UniProtKB"/>
</dbReference>
<dbReference type="GO" id="GO:0005886">
    <property type="term" value="C:plasma membrane"/>
    <property type="evidence" value="ECO:0000314"/>
    <property type="project" value="BHF-UCL"/>
</dbReference>
<dbReference type="GO" id="GO:0005109">
    <property type="term" value="F:frizzled binding"/>
    <property type="evidence" value="ECO:0000353"/>
    <property type="project" value="BHF-UCL"/>
</dbReference>
<dbReference type="GO" id="GO:0005114">
    <property type="term" value="F:type II transforming growth factor beta receptor binding"/>
    <property type="evidence" value="ECO:0000304"/>
    <property type="project" value="BHF-UCL"/>
</dbReference>
<dbReference type="GO" id="GO:0016477">
    <property type="term" value="P:cell migration"/>
    <property type="evidence" value="ECO:0000314"/>
    <property type="project" value="BHF-UCL"/>
</dbReference>
<dbReference type="GO" id="GO:0030514">
    <property type="term" value="P:negative regulation of BMP signaling pathway"/>
    <property type="evidence" value="ECO:0000315"/>
    <property type="project" value="ARUK-UCL"/>
</dbReference>
<dbReference type="GO" id="GO:0045668">
    <property type="term" value="P:negative regulation of osteoblast differentiation"/>
    <property type="evidence" value="ECO:0000315"/>
    <property type="project" value="ARUK-UCL"/>
</dbReference>
<dbReference type="GO" id="GO:0030512">
    <property type="term" value="P:negative regulation of transforming growth factor beta receptor signaling pathway"/>
    <property type="evidence" value="ECO:0000314"/>
    <property type="project" value="BHF-UCL"/>
</dbReference>
<dbReference type="GO" id="GO:0090263">
    <property type="term" value="P:positive regulation of canonical Wnt signaling pathway"/>
    <property type="evidence" value="ECO:0000314"/>
    <property type="project" value="BHF-UCL"/>
</dbReference>
<dbReference type="GO" id="GO:0008284">
    <property type="term" value="P:positive regulation of cell population proliferation"/>
    <property type="evidence" value="ECO:0000315"/>
    <property type="project" value="BHF-UCL"/>
</dbReference>
<dbReference type="GO" id="GO:0045893">
    <property type="term" value="P:positive regulation of DNA-templated transcription"/>
    <property type="evidence" value="ECO:0000314"/>
    <property type="project" value="BHF-UCL"/>
</dbReference>
<dbReference type="GO" id="GO:0010718">
    <property type="term" value="P:positive regulation of epithelial to mesenchymal transition"/>
    <property type="evidence" value="ECO:0000315"/>
    <property type="project" value="BHF-UCL"/>
</dbReference>
<dbReference type="GO" id="GO:0032092">
    <property type="term" value="P:positive regulation of protein binding"/>
    <property type="evidence" value="ECO:0000315"/>
    <property type="project" value="BHF-UCL"/>
</dbReference>
<dbReference type="GO" id="GO:0008360">
    <property type="term" value="P:regulation of cell shape"/>
    <property type="evidence" value="ECO:0000315"/>
    <property type="project" value="BHF-UCL"/>
</dbReference>
<dbReference type="GO" id="GO:0007179">
    <property type="term" value="P:transforming growth factor beta receptor signaling pathway"/>
    <property type="evidence" value="ECO:0000318"/>
    <property type="project" value="GO_Central"/>
</dbReference>
<dbReference type="CDD" id="cd23576">
    <property type="entry name" value="TFP_LU_ECD_BAMBI"/>
    <property type="match status" value="1"/>
</dbReference>
<dbReference type="FunFam" id="2.10.60.10:FF:000018">
    <property type="entry name" value="BMP and activin membrane-bound inhibitor homolog"/>
    <property type="match status" value="1"/>
</dbReference>
<dbReference type="Gene3D" id="2.10.60.10">
    <property type="entry name" value="CD59"/>
    <property type="match status" value="1"/>
</dbReference>
<dbReference type="InterPro" id="IPR009345">
    <property type="entry name" value="BAMBI"/>
</dbReference>
<dbReference type="InterPro" id="IPR045806">
    <property type="entry name" value="BAMBI_C"/>
</dbReference>
<dbReference type="InterPro" id="IPR045807">
    <property type="entry name" value="BAMBI_N"/>
</dbReference>
<dbReference type="InterPro" id="IPR045860">
    <property type="entry name" value="Snake_toxin-like_sf"/>
</dbReference>
<dbReference type="PANTHER" id="PTHR15505:SF1">
    <property type="entry name" value="BMP AND ACTIVIN MEMBRANE-BOUND INHIBITOR HOMOLOG"/>
    <property type="match status" value="1"/>
</dbReference>
<dbReference type="PANTHER" id="PTHR15505">
    <property type="entry name" value="RIIA DOMAIN-CONTAINING PROTEIN 1"/>
    <property type="match status" value="1"/>
</dbReference>
<dbReference type="Pfam" id="PF06211">
    <property type="entry name" value="BAMBI"/>
    <property type="match status" value="1"/>
</dbReference>
<dbReference type="Pfam" id="PF19337">
    <property type="entry name" value="BAMBI_C"/>
    <property type="match status" value="1"/>
</dbReference>
<dbReference type="PIRSF" id="PIRSF037456">
    <property type="entry name" value="BAMBI"/>
    <property type="match status" value="1"/>
</dbReference>
<dbReference type="SUPFAM" id="SSF57302">
    <property type="entry name" value="Snake toxin-like"/>
    <property type="match status" value="1"/>
</dbReference>
<protein>
    <recommendedName>
        <fullName>BMP and activin membrane-bound inhibitor homolog</fullName>
    </recommendedName>
    <alternativeName>
        <fullName>Non-metastatic gene A protein</fullName>
    </alternativeName>
    <alternativeName>
        <fullName>Putative transmembrane protein NMA</fullName>
    </alternativeName>
</protein>
<organism>
    <name type="scientific">Homo sapiens</name>
    <name type="common">Human</name>
    <dbReference type="NCBI Taxonomy" id="9606"/>
    <lineage>
        <taxon>Eukaryota</taxon>
        <taxon>Metazoa</taxon>
        <taxon>Chordata</taxon>
        <taxon>Craniata</taxon>
        <taxon>Vertebrata</taxon>
        <taxon>Euteleostomi</taxon>
        <taxon>Mammalia</taxon>
        <taxon>Eutheria</taxon>
        <taxon>Euarchontoglires</taxon>
        <taxon>Primates</taxon>
        <taxon>Haplorrhini</taxon>
        <taxon>Catarrhini</taxon>
        <taxon>Hominidae</taxon>
        <taxon>Homo</taxon>
    </lineage>
</organism>
<proteinExistence type="evidence at protein level"/>